<protein>
    <recommendedName>
        <fullName evidence="23">Bone morphogenetic protein 4</fullName>
        <shortName evidence="23">BMP-4</shortName>
    </recommendedName>
    <alternativeName>
        <fullName evidence="23">Bone morphogenetic protein 2B</fullName>
        <shortName evidence="23">BMP-2B</shortName>
    </alternativeName>
</protein>
<feature type="signal peptide" evidence="3">
    <location>
        <begin position="1"/>
        <end position="19"/>
    </location>
</feature>
<feature type="propeptide" id="PRO_0000033858">
    <location>
        <begin position="20"/>
        <end position="292"/>
    </location>
</feature>
<feature type="chain" id="PRO_0000033859" description="Bone morphogenetic protein 4">
    <location>
        <begin position="293"/>
        <end position="408"/>
    </location>
</feature>
<feature type="region of interest" description="Disordered" evidence="4">
    <location>
        <begin position="91"/>
        <end position="111"/>
    </location>
</feature>
<feature type="region of interest" description="Disordered" evidence="4">
    <location>
        <begin position="281"/>
        <end position="307"/>
    </location>
</feature>
<feature type="compositionally biased region" description="Basic residues" evidence="4">
    <location>
        <begin position="284"/>
        <end position="307"/>
    </location>
</feature>
<feature type="modified residue" description="Phosphoserine" evidence="2">
    <location>
        <position position="91"/>
    </location>
</feature>
<feature type="glycosylation site" description="N-linked (GlcNAc...) asparagine" evidence="3">
    <location>
        <position position="144"/>
    </location>
</feature>
<feature type="glycosylation site" description="N-linked (GlcNAc...) asparagine" evidence="3">
    <location>
        <position position="209"/>
    </location>
</feature>
<feature type="glycosylation site" description="N-linked (GlcNAc...) asparagine" evidence="3">
    <location>
        <position position="350"/>
    </location>
</feature>
<feature type="glycosylation site" description="N-linked (GlcNAc...) asparagine" evidence="3">
    <location>
        <position position="365"/>
    </location>
</feature>
<feature type="disulfide bond" evidence="1">
    <location>
        <begin position="308"/>
        <end position="373"/>
    </location>
</feature>
<feature type="disulfide bond" evidence="1">
    <location>
        <begin position="337"/>
        <end position="405"/>
    </location>
</feature>
<feature type="disulfide bond" evidence="1">
    <location>
        <begin position="341"/>
        <end position="407"/>
    </location>
</feature>
<feature type="disulfide bond" description="Interchain" evidence="1">
    <location>
        <position position="372"/>
    </location>
</feature>
<feature type="sequence conflict" description="In Ref. 2; BAA03555." evidence="22" ref="2">
    <original>C</original>
    <variation>S</variation>
    <location>
        <position position="407"/>
    </location>
</feature>
<name>BMP4_MOUSE</name>
<proteinExistence type="evidence at protein level"/>
<dbReference type="EMBL" id="X56848">
    <property type="protein sequence ID" value="CAA40179.1"/>
    <property type="molecule type" value="mRNA"/>
</dbReference>
<dbReference type="EMBL" id="D14814">
    <property type="protein sequence ID" value="BAA03555.1"/>
    <property type="molecule type" value="Genomic_DNA"/>
</dbReference>
<dbReference type="EMBL" id="S65032">
    <property type="protein sequence ID" value="AAB28021.1"/>
    <property type="molecule type" value="mRNA"/>
</dbReference>
<dbReference type="EMBL" id="L47480">
    <property type="protein sequence ID" value="AAC37698.1"/>
    <property type="status" value="ALT_INIT"/>
    <property type="molecule type" value="Genomic_DNA"/>
</dbReference>
<dbReference type="EMBL" id="BC013459">
    <property type="protein sequence ID" value="AAH13459.1"/>
    <property type="molecule type" value="mRNA"/>
</dbReference>
<dbReference type="EMBL" id="BC034053">
    <property type="protein sequence ID" value="AAH34053.1"/>
    <property type="molecule type" value="mRNA"/>
</dbReference>
<dbReference type="EMBL" id="BC052846">
    <property type="protein sequence ID" value="AAH52846.1"/>
    <property type="molecule type" value="mRNA"/>
</dbReference>
<dbReference type="CCDS" id="CCDS36897.1"/>
<dbReference type="PIR" id="I49541">
    <property type="entry name" value="I49541"/>
</dbReference>
<dbReference type="PIR" id="JH0801">
    <property type="entry name" value="JH0801"/>
</dbReference>
<dbReference type="RefSeq" id="NP_001303289.1">
    <property type="nucleotide sequence ID" value="NM_001316360.1"/>
</dbReference>
<dbReference type="RefSeq" id="NP_031580.2">
    <property type="nucleotide sequence ID" value="NM_007554.3"/>
</dbReference>
<dbReference type="RefSeq" id="XP_006518530.1">
    <property type="nucleotide sequence ID" value="XM_006518467.3"/>
</dbReference>
<dbReference type="RefSeq" id="XP_006518531.1">
    <property type="nucleotide sequence ID" value="XM_006518468.3"/>
</dbReference>
<dbReference type="RefSeq" id="XP_011243236.1">
    <property type="nucleotide sequence ID" value="XM_011244934.2"/>
</dbReference>
<dbReference type="RefSeq" id="XP_011243237.1">
    <property type="nucleotide sequence ID" value="XM_011244935.2"/>
</dbReference>
<dbReference type="SMR" id="P21275"/>
<dbReference type="BioGRID" id="198364">
    <property type="interactions" value="5"/>
</dbReference>
<dbReference type="FunCoup" id="P21275">
    <property type="interactions" value="590"/>
</dbReference>
<dbReference type="STRING" id="10090.ENSMUSP00000073720"/>
<dbReference type="BindingDB" id="P21275"/>
<dbReference type="ChEMBL" id="CHEMBL2384894"/>
<dbReference type="GlyCosmos" id="P21275">
    <property type="glycosylation" value="4 sites, No reported glycans"/>
</dbReference>
<dbReference type="GlyGen" id="P21275">
    <property type="glycosylation" value="4 sites"/>
</dbReference>
<dbReference type="iPTMnet" id="P21275"/>
<dbReference type="PhosphoSitePlus" id="P21275"/>
<dbReference type="PaxDb" id="10090-ENSMUSP00000073720"/>
<dbReference type="ProteomicsDB" id="265221"/>
<dbReference type="Antibodypedia" id="3485">
    <property type="antibodies" value="893 antibodies from 46 providers"/>
</dbReference>
<dbReference type="DNASU" id="12159"/>
<dbReference type="Ensembl" id="ENSMUST00000074077.12">
    <property type="protein sequence ID" value="ENSMUSP00000073720.6"/>
    <property type="gene ID" value="ENSMUSG00000021835.16"/>
</dbReference>
<dbReference type="Ensembl" id="ENSMUST00000100676.3">
    <property type="protein sequence ID" value="ENSMUSP00000098242.3"/>
    <property type="gene ID" value="ENSMUSG00000021835.16"/>
</dbReference>
<dbReference type="GeneID" id="12159"/>
<dbReference type="KEGG" id="mmu:12159"/>
<dbReference type="UCSC" id="uc007thd.2">
    <property type="organism name" value="mouse"/>
</dbReference>
<dbReference type="AGR" id="MGI:88180"/>
<dbReference type="CTD" id="652"/>
<dbReference type="MGI" id="MGI:88180">
    <property type="gene designation" value="Bmp4"/>
</dbReference>
<dbReference type="VEuPathDB" id="HostDB:ENSMUSG00000021835"/>
<dbReference type="eggNOG" id="KOG3900">
    <property type="taxonomic scope" value="Eukaryota"/>
</dbReference>
<dbReference type="GeneTree" id="ENSGT00940000159502"/>
<dbReference type="HOGENOM" id="CLU_020515_4_2_1"/>
<dbReference type="InParanoid" id="P21275"/>
<dbReference type="OMA" id="FQDVGWS"/>
<dbReference type="OrthoDB" id="5987191at2759"/>
<dbReference type="PhylomeDB" id="P21275"/>
<dbReference type="TreeFam" id="TF351789"/>
<dbReference type="Reactome" id="R-MMU-2129379">
    <property type="pathway name" value="Molecules associated with elastic fibres"/>
</dbReference>
<dbReference type="Reactome" id="R-MMU-381426">
    <property type="pathway name" value="Regulation of Insulin-like Growth Factor (IGF) transport and uptake by Insulin-like Growth Factor Binding Proteins (IGFBPs)"/>
</dbReference>
<dbReference type="Reactome" id="R-MMU-8957275">
    <property type="pathway name" value="Post-translational protein phosphorylation"/>
</dbReference>
<dbReference type="BioGRID-ORCS" id="12159">
    <property type="hits" value="1 hit in 78 CRISPR screens"/>
</dbReference>
<dbReference type="ChiTaRS" id="Bmp4">
    <property type="organism name" value="mouse"/>
</dbReference>
<dbReference type="PRO" id="PR:P21275"/>
<dbReference type="Proteomes" id="UP000000589">
    <property type="component" value="Chromosome 14"/>
</dbReference>
<dbReference type="RNAct" id="P21275">
    <property type="molecule type" value="protein"/>
</dbReference>
<dbReference type="Bgee" id="ENSMUSG00000021835">
    <property type="expression patterns" value="Expressed in extraembryonic ectoderm and 415 other cell types or tissues"/>
</dbReference>
<dbReference type="ExpressionAtlas" id="P21275">
    <property type="expression patterns" value="baseline and differential"/>
</dbReference>
<dbReference type="GO" id="GO:0005576">
    <property type="term" value="C:extracellular region"/>
    <property type="evidence" value="ECO:0000314"/>
    <property type="project" value="MGI"/>
</dbReference>
<dbReference type="GO" id="GO:0005615">
    <property type="term" value="C:extracellular space"/>
    <property type="evidence" value="ECO:0000314"/>
    <property type="project" value="MGI"/>
</dbReference>
<dbReference type="GO" id="GO:0070700">
    <property type="term" value="F:BMP receptor binding"/>
    <property type="evidence" value="ECO:0000250"/>
    <property type="project" value="UniProtKB"/>
</dbReference>
<dbReference type="GO" id="GO:0042056">
    <property type="term" value="F:chemoattractant activity"/>
    <property type="evidence" value="ECO:0000250"/>
    <property type="project" value="UniProtKB"/>
</dbReference>
<dbReference type="GO" id="GO:0039706">
    <property type="term" value="F:co-receptor binding"/>
    <property type="evidence" value="ECO:0007669"/>
    <property type="project" value="Ensembl"/>
</dbReference>
<dbReference type="GO" id="GO:0005125">
    <property type="term" value="F:cytokine activity"/>
    <property type="evidence" value="ECO:0000266"/>
    <property type="project" value="MGI"/>
</dbReference>
<dbReference type="GO" id="GO:0008083">
    <property type="term" value="F:growth factor activity"/>
    <property type="evidence" value="ECO:0007669"/>
    <property type="project" value="UniProtKB-KW"/>
</dbReference>
<dbReference type="GO" id="GO:0008201">
    <property type="term" value="F:heparin binding"/>
    <property type="evidence" value="ECO:0000314"/>
    <property type="project" value="MGI"/>
</dbReference>
<dbReference type="GO" id="GO:0043539">
    <property type="term" value="F:protein serine/threonine kinase activator activity"/>
    <property type="evidence" value="ECO:0007669"/>
    <property type="project" value="Ensembl"/>
</dbReference>
<dbReference type="GO" id="GO:0036305">
    <property type="term" value="P:ameloblast differentiation"/>
    <property type="evidence" value="ECO:0000314"/>
    <property type="project" value="MGI"/>
</dbReference>
<dbReference type="GO" id="GO:0048646">
    <property type="term" value="P:anatomical structure formation involved in morphogenesis"/>
    <property type="evidence" value="ECO:0000316"/>
    <property type="project" value="MGI"/>
</dbReference>
<dbReference type="GO" id="GO:0001525">
    <property type="term" value="P:angiogenesis"/>
    <property type="evidence" value="ECO:0000315"/>
    <property type="project" value="MGI"/>
</dbReference>
<dbReference type="GO" id="GO:0009948">
    <property type="term" value="P:anterior/posterior axis specification"/>
    <property type="evidence" value="ECO:0000316"/>
    <property type="project" value="MGI"/>
</dbReference>
<dbReference type="GO" id="GO:0003180">
    <property type="term" value="P:aortic valve morphogenesis"/>
    <property type="evidence" value="ECO:0000315"/>
    <property type="project" value="BHF-UCL"/>
</dbReference>
<dbReference type="GO" id="GO:0001568">
    <property type="term" value="P:blood vessel development"/>
    <property type="evidence" value="ECO:0000314"/>
    <property type="project" value="MGI"/>
</dbReference>
<dbReference type="GO" id="GO:0002043">
    <property type="term" value="P:blood vessel endothelial cell proliferation involved in sprouting angiogenesis"/>
    <property type="evidence" value="ECO:0000250"/>
    <property type="project" value="UniProtKB"/>
</dbReference>
<dbReference type="GO" id="GO:0030509">
    <property type="term" value="P:BMP signaling pathway"/>
    <property type="evidence" value="ECO:0000314"/>
    <property type="project" value="MGI"/>
</dbReference>
<dbReference type="GO" id="GO:0060348">
    <property type="term" value="P:bone development"/>
    <property type="evidence" value="ECO:0000314"/>
    <property type="project" value="MGI"/>
</dbReference>
<dbReference type="GO" id="GO:0060442">
    <property type="term" value="P:branching involved in prostate gland morphogenesis"/>
    <property type="evidence" value="ECO:0000315"/>
    <property type="project" value="MGI"/>
</dbReference>
<dbReference type="GO" id="GO:0001658">
    <property type="term" value="P:branching involved in ureteric bud morphogenesis"/>
    <property type="evidence" value="ECO:0000316"/>
    <property type="project" value="MGI"/>
</dbReference>
<dbReference type="GO" id="GO:0060433">
    <property type="term" value="P:bronchus development"/>
    <property type="evidence" value="ECO:0000266"/>
    <property type="project" value="MGI"/>
</dbReference>
<dbReference type="GO" id="GO:0060503">
    <property type="term" value="P:bud dilation involved in lung branching"/>
    <property type="evidence" value="ECO:0000266"/>
    <property type="project" value="MGI"/>
</dbReference>
<dbReference type="GO" id="GO:0060449">
    <property type="term" value="P:bud elongation involved in lung branching"/>
    <property type="evidence" value="ECO:0000314"/>
    <property type="project" value="MGI"/>
</dbReference>
<dbReference type="GO" id="GO:0043010">
    <property type="term" value="P:camera-type eye development"/>
    <property type="evidence" value="ECO:0000315"/>
    <property type="project" value="MGI"/>
</dbReference>
<dbReference type="GO" id="GO:0048593">
    <property type="term" value="P:camera-type eye morphogenesis"/>
    <property type="evidence" value="ECO:0000315"/>
    <property type="project" value="MGI"/>
</dbReference>
<dbReference type="GO" id="GO:0055007">
    <property type="term" value="P:cardiac muscle cell differentiation"/>
    <property type="evidence" value="ECO:0000316"/>
    <property type="project" value="BHF-UCL"/>
</dbReference>
<dbReference type="GO" id="GO:0045165">
    <property type="term" value="P:cell fate commitment"/>
    <property type="evidence" value="ECO:0000314"/>
    <property type="project" value="MGI"/>
</dbReference>
<dbReference type="GO" id="GO:0008283">
    <property type="term" value="P:cell population proliferation"/>
    <property type="evidence" value="ECO:0000316"/>
    <property type="project" value="MGI"/>
</dbReference>
<dbReference type="GO" id="GO:0071363">
    <property type="term" value="P:cellular response to growth factor stimulus"/>
    <property type="evidence" value="ECO:0000314"/>
    <property type="project" value="MGI"/>
</dbReference>
<dbReference type="GO" id="GO:0002062">
    <property type="term" value="P:chondrocyte differentiation"/>
    <property type="evidence" value="ECO:0000314"/>
    <property type="project" value="MGI"/>
</dbReference>
<dbReference type="GO" id="GO:0060976">
    <property type="term" value="P:coronary vasculature development"/>
    <property type="evidence" value="ECO:0000315"/>
    <property type="project" value="BHF-UCL"/>
</dbReference>
<dbReference type="GO" id="GO:0060363">
    <property type="term" value="P:cranial suture morphogenesis"/>
    <property type="evidence" value="ECO:0000314"/>
    <property type="project" value="MGI"/>
</dbReference>
<dbReference type="GO" id="GO:0035993">
    <property type="term" value="P:deltoid tuberosity development"/>
    <property type="evidence" value="ECO:0000315"/>
    <property type="project" value="UniProtKB"/>
</dbReference>
<dbReference type="GO" id="GO:0021904">
    <property type="term" value="P:dorsal/ventral neural tube patterning"/>
    <property type="evidence" value="ECO:0000314"/>
    <property type="project" value="MGI"/>
</dbReference>
<dbReference type="GO" id="GO:0048701">
    <property type="term" value="P:embryonic cranial skeleton morphogenesis"/>
    <property type="evidence" value="ECO:0000315"/>
    <property type="project" value="MGI"/>
</dbReference>
<dbReference type="GO" id="GO:0042733">
    <property type="term" value="P:embryonic digit morphogenesis"/>
    <property type="evidence" value="ECO:0000316"/>
    <property type="project" value="MGI"/>
</dbReference>
<dbReference type="GO" id="GO:0035116">
    <property type="term" value="P:embryonic hindlimb morphogenesis"/>
    <property type="evidence" value="ECO:0000316"/>
    <property type="project" value="MGI"/>
</dbReference>
<dbReference type="GO" id="GO:0030326">
    <property type="term" value="P:embryonic limb morphogenesis"/>
    <property type="evidence" value="ECO:0000315"/>
    <property type="project" value="MGI"/>
</dbReference>
<dbReference type="GO" id="GO:0048598">
    <property type="term" value="P:embryonic morphogenesis"/>
    <property type="evidence" value="ECO:0000315"/>
    <property type="project" value="MGI"/>
</dbReference>
<dbReference type="GO" id="GO:0060272">
    <property type="term" value="P:embryonic skeletal joint morphogenesis"/>
    <property type="evidence" value="ECO:0000315"/>
    <property type="project" value="MGI"/>
</dbReference>
<dbReference type="GO" id="GO:0048706">
    <property type="term" value="P:embryonic skeletal system development"/>
    <property type="evidence" value="ECO:0000315"/>
    <property type="project" value="MGI"/>
</dbReference>
<dbReference type="GO" id="GO:0048704">
    <property type="term" value="P:embryonic skeletal system morphogenesis"/>
    <property type="evidence" value="ECO:0000315"/>
    <property type="project" value="MGI"/>
</dbReference>
<dbReference type="GO" id="GO:0003197">
    <property type="term" value="P:endocardial cushion development"/>
    <property type="evidence" value="ECO:0000315"/>
    <property type="project" value="BHF-UCL"/>
</dbReference>
<dbReference type="GO" id="GO:0001958">
    <property type="term" value="P:endochondral ossification"/>
    <property type="evidence" value="ECO:0000315"/>
    <property type="project" value="UniProtKB"/>
</dbReference>
<dbReference type="GO" id="GO:0007492">
    <property type="term" value="P:endoderm development"/>
    <property type="evidence" value="ECO:0000314"/>
    <property type="project" value="MGI"/>
</dbReference>
<dbReference type="GO" id="GO:0050673">
    <property type="term" value="P:epithelial cell proliferation"/>
    <property type="evidence" value="ECO:0000316"/>
    <property type="project" value="MGI"/>
</dbReference>
<dbReference type="GO" id="GO:0060502">
    <property type="term" value="P:epithelial cell proliferation involved in lung morphogenesis"/>
    <property type="evidence" value="ECO:0000266"/>
    <property type="project" value="MGI"/>
</dbReference>
<dbReference type="GO" id="GO:0060441">
    <property type="term" value="P:epithelial tube branching involved in lung morphogenesis"/>
    <property type="evidence" value="ECO:0000266"/>
    <property type="project" value="MGI"/>
</dbReference>
<dbReference type="GO" id="GO:0060684">
    <property type="term" value="P:epithelial-mesenchymal cell signaling"/>
    <property type="evidence" value="ECO:0000314"/>
    <property type="project" value="MGI"/>
</dbReference>
<dbReference type="GO" id="GO:0060429">
    <property type="term" value="P:epithelium development"/>
    <property type="evidence" value="ECO:0000314"/>
    <property type="project" value="MGI"/>
</dbReference>
<dbReference type="GO" id="GO:0030218">
    <property type="term" value="P:erythrocyte differentiation"/>
    <property type="evidence" value="ECO:0000314"/>
    <property type="project" value="MGI"/>
</dbReference>
<dbReference type="GO" id="GO:0030900">
    <property type="term" value="P:forebrain development"/>
    <property type="evidence" value="ECO:0000315"/>
    <property type="project" value="MGI"/>
</dbReference>
<dbReference type="GO" id="GO:0010467">
    <property type="term" value="P:gene expression"/>
    <property type="evidence" value="ECO:0000314"/>
    <property type="project" value="MGI"/>
</dbReference>
<dbReference type="GO" id="GO:0007281">
    <property type="term" value="P:germ cell development"/>
    <property type="evidence" value="ECO:0000315"/>
    <property type="project" value="MGI"/>
</dbReference>
<dbReference type="GO" id="GO:0072104">
    <property type="term" value="P:glomerular capillary formation"/>
    <property type="evidence" value="ECO:0000315"/>
    <property type="project" value="UniProtKB"/>
</dbReference>
<dbReference type="GO" id="GO:0007507">
    <property type="term" value="P:heart development"/>
    <property type="evidence" value="ECO:0000315"/>
    <property type="project" value="MGI"/>
</dbReference>
<dbReference type="GO" id="GO:0003129">
    <property type="term" value="P:heart induction"/>
    <property type="evidence" value="ECO:0000250"/>
    <property type="project" value="UniProtKB"/>
</dbReference>
<dbReference type="GO" id="GO:0002244">
    <property type="term" value="P:hematopoietic progenitor cell differentiation"/>
    <property type="evidence" value="ECO:0000314"/>
    <property type="project" value="MGI"/>
</dbReference>
<dbReference type="GO" id="GO:0042491">
    <property type="term" value="P:inner ear auditory receptor cell differentiation"/>
    <property type="evidence" value="ECO:0000316"/>
    <property type="project" value="MGI"/>
</dbReference>
<dbReference type="GO" id="GO:0048392">
    <property type="term" value="P:intermediate mesodermal cell differentiation"/>
    <property type="evidence" value="ECO:0000250"/>
    <property type="project" value="UniProtKB"/>
</dbReference>
<dbReference type="GO" id="GO:0001822">
    <property type="term" value="P:kidney development"/>
    <property type="evidence" value="ECO:0000315"/>
    <property type="project" value="MGI"/>
</dbReference>
<dbReference type="GO" id="GO:0060235">
    <property type="term" value="P:lens induction in camera-type eye"/>
    <property type="evidence" value="ECO:0000315"/>
    <property type="project" value="MGI"/>
</dbReference>
<dbReference type="GO" id="GO:0048286">
    <property type="term" value="P:lung alveolus development"/>
    <property type="evidence" value="ECO:0000266"/>
    <property type="project" value="MGI"/>
</dbReference>
<dbReference type="GO" id="GO:0030324">
    <property type="term" value="P:lung development"/>
    <property type="evidence" value="ECO:0000315"/>
    <property type="project" value="MGI"/>
</dbReference>
<dbReference type="GO" id="GO:0060425">
    <property type="term" value="P:lung morphogenesis"/>
    <property type="evidence" value="ECO:0000266"/>
    <property type="project" value="MGI"/>
</dbReference>
<dbReference type="GO" id="GO:0060426">
    <property type="term" value="P:lung vasculature development"/>
    <property type="evidence" value="ECO:0000250"/>
    <property type="project" value="UniProtKB"/>
</dbReference>
<dbReference type="GO" id="GO:0002320">
    <property type="term" value="P:lymphoid progenitor cell differentiation"/>
    <property type="evidence" value="ECO:0000250"/>
    <property type="project" value="UniProtKB"/>
</dbReference>
<dbReference type="GO" id="GO:0030225">
    <property type="term" value="P:macrophage differentiation"/>
    <property type="evidence" value="ECO:0007669"/>
    <property type="project" value="Ensembl"/>
</dbReference>
<dbReference type="GO" id="GO:0060592">
    <property type="term" value="P:mammary gland formation"/>
    <property type="evidence" value="ECO:0000315"/>
    <property type="project" value="MGI"/>
</dbReference>
<dbReference type="GO" id="GO:0003149">
    <property type="term" value="P:membranous septum morphogenesis"/>
    <property type="evidence" value="ECO:0000315"/>
    <property type="project" value="BHF-UCL"/>
</dbReference>
<dbReference type="GO" id="GO:0001707">
    <property type="term" value="P:mesoderm formation"/>
    <property type="evidence" value="ECO:0000314"/>
    <property type="project" value="MGI"/>
</dbReference>
<dbReference type="GO" id="GO:0048333">
    <property type="term" value="P:mesodermal cell differentiation"/>
    <property type="evidence" value="ECO:0000314"/>
    <property type="project" value="MGI"/>
</dbReference>
<dbReference type="GO" id="GO:0007500">
    <property type="term" value="P:mesodermal cell fate determination"/>
    <property type="evidence" value="ECO:0000315"/>
    <property type="project" value="MGI"/>
</dbReference>
<dbReference type="GO" id="GO:0001823">
    <property type="term" value="P:mesonephros development"/>
    <property type="evidence" value="ECO:0000250"/>
    <property type="project" value="UniProtKB"/>
</dbReference>
<dbReference type="GO" id="GO:0001656">
    <property type="term" value="P:metanephros development"/>
    <property type="evidence" value="ECO:0000314"/>
    <property type="project" value="MGI"/>
</dbReference>
<dbReference type="GO" id="GO:0030224">
    <property type="term" value="P:monocyte differentiation"/>
    <property type="evidence" value="ECO:0007669"/>
    <property type="project" value="Ensembl"/>
</dbReference>
<dbReference type="GO" id="GO:0090191">
    <property type="term" value="P:negative regulation of branching involved in ureteric bud morphogenesis"/>
    <property type="evidence" value="ECO:0000314"/>
    <property type="project" value="UniProtKB"/>
</dbReference>
<dbReference type="GO" id="GO:0045786">
    <property type="term" value="P:negative regulation of cell cycle"/>
    <property type="evidence" value="ECO:0000250"/>
    <property type="project" value="UniProtKB"/>
</dbReference>
<dbReference type="GO" id="GO:0008285">
    <property type="term" value="P:negative regulation of cell population proliferation"/>
    <property type="evidence" value="ECO:0000250"/>
    <property type="project" value="UniProtKB"/>
</dbReference>
<dbReference type="GO" id="GO:0032331">
    <property type="term" value="P:negative regulation of chondrocyte differentiation"/>
    <property type="evidence" value="ECO:0000314"/>
    <property type="project" value="MGI"/>
</dbReference>
<dbReference type="GO" id="GO:0050680">
    <property type="term" value="P:negative regulation of epithelial cell proliferation"/>
    <property type="evidence" value="ECO:0000315"/>
    <property type="project" value="MGI"/>
</dbReference>
<dbReference type="GO" id="GO:2001237">
    <property type="term" value="P:negative regulation of extrinsic apoptotic signaling pathway"/>
    <property type="evidence" value="ECO:0000315"/>
    <property type="project" value="BHF-UCL"/>
</dbReference>
<dbReference type="GO" id="GO:0010629">
    <property type="term" value="P:negative regulation of gene expression"/>
    <property type="evidence" value="ECO:0000314"/>
    <property type="project" value="MGI"/>
</dbReference>
<dbReference type="GO" id="GO:0072125">
    <property type="term" value="P:negative regulation of glomerular mesangial cell proliferation"/>
    <property type="evidence" value="ECO:0000250"/>
    <property type="project" value="UniProtKB"/>
</dbReference>
<dbReference type="GO" id="GO:0090194">
    <property type="term" value="P:negative regulation of glomerulus development"/>
    <property type="evidence" value="ECO:0000250"/>
    <property type="project" value="UniProtKB"/>
</dbReference>
<dbReference type="GO" id="GO:0033088">
    <property type="term" value="P:negative regulation of immature T cell proliferation in thymus"/>
    <property type="evidence" value="ECO:0000250"/>
    <property type="project" value="UniProtKB"/>
</dbReference>
<dbReference type="GO" id="GO:0072200">
    <property type="term" value="P:negative regulation of mesenchymal cell proliferation involved in ureter development"/>
    <property type="evidence" value="ECO:0000250"/>
    <property type="project" value="UniProtKB"/>
</dbReference>
<dbReference type="GO" id="GO:2000007">
    <property type="term" value="P:negative regulation of metanephric comma-shaped body morphogenesis"/>
    <property type="evidence" value="ECO:0000250"/>
    <property type="project" value="UniProtKB"/>
</dbReference>
<dbReference type="GO" id="GO:2000005">
    <property type="term" value="P:negative regulation of metanephric S-shaped body morphogenesis"/>
    <property type="evidence" value="ECO:0000250"/>
    <property type="project" value="UniProtKB"/>
</dbReference>
<dbReference type="GO" id="GO:1902894">
    <property type="term" value="P:negative regulation of miRNA transcription"/>
    <property type="evidence" value="ECO:0007669"/>
    <property type="project" value="Ensembl"/>
</dbReference>
<dbReference type="GO" id="GO:0045839">
    <property type="term" value="P:negative regulation of mitotic nuclear division"/>
    <property type="evidence" value="ECO:0000250"/>
    <property type="project" value="UniProtKB"/>
</dbReference>
<dbReference type="GO" id="GO:0045662">
    <property type="term" value="P:negative regulation of myoblast differentiation"/>
    <property type="evidence" value="ECO:0000266"/>
    <property type="project" value="MGI"/>
</dbReference>
<dbReference type="GO" id="GO:0060686">
    <property type="term" value="P:negative regulation of prostatic bud formation"/>
    <property type="evidence" value="ECO:0000314"/>
    <property type="project" value="MGI"/>
</dbReference>
<dbReference type="GO" id="GO:0045843">
    <property type="term" value="P:negative regulation of striated muscle tissue development"/>
    <property type="evidence" value="ECO:0000266"/>
    <property type="project" value="MGI"/>
</dbReference>
<dbReference type="GO" id="GO:0070244">
    <property type="term" value="P:negative regulation of thymocyte apoptotic process"/>
    <property type="evidence" value="ECO:0000250"/>
    <property type="project" value="UniProtKB"/>
</dbReference>
<dbReference type="GO" id="GO:0000122">
    <property type="term" value="P:negative regulation of transcription by RNA polymerase II"/>
    <property type="evidence" value="ECO:0000314"/>
    <property type="project" value="MGI"/>
</dbReference>
<dbReference type="GO" id="GO:0072179">
    <property type="term" value="P:nephric duct formation"/>
    <property type="evidence" value="ECO:0000250"/>
    <property type="project" value="UniProtKB"/>
</dbReference>
<dbReference type="GO" id="GO:0001843">
    <property type="term" value="P:neural tube closure"/>
    <property type="evidence" value="ECO:0000314"/>
    <property type="project" value="MGI"/>
</dbReference>
<dbReference type="GO" id="GO:0048663">
    <property type="term" value="P:neuron fate commitment"/>
    <property type="evidence" value="ECO:0000314"/>
    <property type="project" value="MGI"/>
</dbReference>
<dbReference type="GO" id="GO:0042476">
    <property type="term" value="P:odontogenesis"/>
    <property type="evidence" value="ECO:0000250"/>
    <property type="project" value="UniProtKB"/>
</dbReference>
<dbReference type="GO" id="GO:0042475">
    <property type="term" value="P:odontogenesis of dentin-containing tooth"/>
    <property type="evidence" value="ECO:0000314"/>
    <property type="project" value="MGI"/>
</dbReference>
<dbReference type="GO" id="GO:0001759">
    <property type="term" value="P:organ induction"/>
    <property type="evidence" value="ECO:0000315"/>
    <property type="project" value="MGI"/>
</dbReference>
<dbReference type="GO" id="GO:0001649">
    <property type="term" value="P:osteoblast differentiation"/>
    <property type="evidence" value="ECO:0000314"/>
    <property type="project" value="MGI"/>
</dbReference>
<dbReference type="GO" id="GO:0003151">
    <property type="term" value="P:outflow tract morphogenesis"/>
    <property type="evidence" value="ECO:0000316"/>
    <property type="project" value="BHF-UCL"/>
</dbReference>
<dbReference type="GO" id="GO:0003148">
    <property type="term" value="P:outflow tract septum morphogenesis"/>
    <property type="evidence" value="ECO:0000315"/>
    <property type="project" value="BHF-UCL"/>
</dbReference>
<dbReference type="GO" id="GO:1904238">
    <property type="term" value="P:pericyte cell differentiation"/>
    <property type="evidence" value="ECO:0000314"/>
    <property type="project" value="MGI"/>
</dbReference>
<dbReference type="GO" id="GO:0061626">
    <property type="term" value="P:pharyngeal arch artery morphogenesis"/>
    <property type="evidence" value="ECO:0000315"/>
    <property type="project" value="BHF-UCL"/>
</dbReference>
<dbReference type="GO" id="GO:0021983">
    <property type="term" value="P:pituitary gland development"/>
    <property type="evidence" value="ECO:0000315"/>
    <property type="project" value="MGI"/>
</dbReference>
<dbReference type="GO" id="GO:0050918">
    <property type="term" value="P:positive chemotaxis"/>
    <property type="evidence" value="ECO:0000250"/>
    <property type="project" value="UniProtKB"/>
</dbReference>
<dbReference type="GO" id="GO:0043065">
    <property type="term" value="P:positive regulation of apoptotic process"/>
    <property type="evidence" value="ECO:0000266"/>
    <property type="project" value="MGI"/>
</dbReference>
<dbReference type="GO" id="GO:0030513">
    <property type="term" value="P:positive regulation of BMP signaling pathway"/>
    <property type="evidence" value="ECO:0000314"/>
    <property type="project" value="UniProtKB"/>
</dbReference>
<dbReference type="GO" id="GO:0030501">
    <property type="term" value="P:positive regulation of bone mineralization"/>
    <property type="evidence" value="ECO:0000250"/>
    <property type="project" value="UniProtKB"/>
</dbReference>
<dbReference type="GO" id="GO:0061047">
    <property type="term" value="P:positive regulation of branching involved in lung morphogenesis"/>
    <property type="evidence" value="ECO:0000315"/>
    <property type="project" value="UniProtKB"/>
</dbReference>
<dbReference type="GO" id="GO:0055020">
    <property type="term" value="P:positive regulation of cardiac muscle fiber development"/>
    <property type="evidence" value="ECO:0000250"/>
    <property type="project" value="UniProtKB"/>
</dbReference>
<dbReference type="GO" id="GO:1905312">
    <property type="term" value="P:positive regulation of cardiac neural crest cell migration involved in outflow tract morphogenesis"/>
    <property type="evidence" value="ECO:0000316"/>
    <property type="project" value="BHF-UCL"/>
</dbReference>
<dbReference type="GO" id="GO:0061036">
    <property type="term" value="P:positive regulation of cartilage development"/>
    <property type="evidence" value="ECO:0000266"/>
    <property type="project" value="MGI"/>
</dbReference>
<dbReference type="GO" id="GO:0030335">
    <property type="term" value="P:positive regulation of cell migration"/>
    <property type="evidence" value="ECO:0000315"/>
    <property type="project" value="CACAO"/>
</dbReference>
<dbReference type="GO" id="GO:0008284">
    <property type="term" value="P:positive regulation of cell population proliferation"/>
    <property type="evidence" value="ECO:0000315"/>
    <property type="project" value="BHF-UCL"/>
</dbReference>
<dbReference type="GO" id="GO:0032967">
    <property type="term" value="P:positive regulation of collagen biosynthetic process"/>
    <property type="evidence" value="ECO:0000250"/>
    <property type="project" value="UniProtKB"/>
</dbReference>
<dbReference type="GO" id="GO:0045893">
    <property type="term" value="P:positive regulation of DNA-templated transcription"/>
    <property type="evidence" value="ECO:0000250"/>
    <property type="project" value="UniProtKB"/>
</dbReference>
<dbReference type="GO" id="GO:0045603">
    <property type="term" value="P:positive regulation of endothelial cell differentiation"/>
    <property type="evidence" value="ECO:0000314"/>
    <property type="project" value="DFLAT"/>
</dbReference>
<dbReference type="GO" id="GO:0010595">
    <property type="term" value="P:positive regulation of endothelial cell migration"/>
    <property type="evidence" value="ECO:0000304"/>
    <property type="project" value="DFLAT"/>
</dbReference>
<dbReference type="GO" id="GO:0001938">
    <property type="term" value="P:positive regulation of endothelial cell proliferation"/>
    <property type="evidence" value="ECO:0000314"/>
    <property type="project" value="DFLAT"/>
</dbReference>
<dbReference type="GO" id="GO:0045606">
    <property type="term" value="P:positive regulation of epidermal cell differentiation"/>
    <property type="evidence" value="ECO:0000250"/>
    <property type="project" value="CAFA"/>
</dbReference>
<dbReference type="GO" id="GO:0030858">
    <property type="term" value="P:positive regulation of epithelial cell differentiation"/>
    <property type="evidence" value="ECO:0000314"/>
    <property type="project" value="MGI"/>
</dbReference>
<dbReference type="GO" id="GO:0050679">
    <property type="term" value="P:positive regulation of epithelial cell proliferation"/>
    <property type="evidence" value="ECO:0000250"/>
    <property type="project" value="UniProtKB"/>
</dbReference>
<dbReference type="GO" id="GO:0010718">
    <property type="term" value="P:positive regulation of epithelial to mesenchymal transition"/>
    <property type="evidence" value="ECO:0000316"/>
    <property type="project" value="BHF-UCL"/>
</dbReference>
<dbReference type="GO" id="GO:0070374">
    <property type="term" value="P:positive regulation of ERK1 and ERK2 cascade"/>
    <property type="evidence" value="ECO:0000314"/>
    <property type="project" value="MGI"/>
</dbReference>
<dbReference type="GO" id="GO:0010628">
    <property type="term" value="P:positive regulation of gene expression"/>
    <property type="evidence" value="ECO:0000314"/>
    <property type="project" value="CACAO"/>
</dbReference>
<dbReference type="GO" id="GO:1902895">
    <property type="term" value="P:positive regulation of miRNA transcription"/>
    <property type="evidence" value="ECO:0000316"/>
    <property type="project" value="BHF-UCL"/>
</dbReference>
<dbReference type="GO" id="GO:0045666">
    <property type="term" value="P:positive regulation of neuron differentiation"/>
    <property type="evidence" value="ECO:0000314"/>
    <property type="project" value="MGI"/>
</dbReference>
<dbReference type="GO" id="GO:1901331">
    <property type="term" value="P:positive regulation of odontoblast differentiation"/>
    <property type="evidence" value="ECO:0000315"/>
    <property type="project" value="UniProtKB"/>
</dbReference>
<dbReference type="GO" id="GO:0045778">
    <property type="term" value="P:positive regulation of ossification"/>
    <property type="evidence" value="ECO:0000314"/>
    <property type="project" value="MGI"/>
</dbReference>
<dbReference type="GO" id="GO:0045669">
    <property type="term" value="P:positive regulation of osteoblast differentiation"/>
    <property type="evidence" value="ECO:0000250"/>
    <property type="project" value="UniProtKB"/>
</dbReference>
<dbReference type="GO" id="GO:1900745">
    <property type="term" value="P:positive regulation of p38MAPK cascade"/>
    <property type="evidence" value="ECO:0007669"/>
    <property type="project" value="Ensembl"/>
</dbReference>
<dbReference type="GO" id="GO:2000636">
    <property type="term" value="P:positive regulation of primary miRNA processing"/>
    <property type="evidence" value="ECO:0007669"/>
    <property type="project" value="Ensembl"/>
</dbReference>
<dbReference type="GO" id="GO:0043068">
    <property type="term" value="P:positive regulation of programmed cell death"/>
    <property type="evidence" value="ECO:0000266"/>
    <property type="project" value="MGI"/>
</dbReference>
<dbReference type="GO" id="GO:1900182">
    <property type="term" value="P:positive regulation of protein localization to nucleus"/>
    <property type="evidence" value="ECO:0000315"/>
    <property type="project" value="UniProtKB"/>
</dbReference>
<dbReference type="GO" id="GO:0060391">
    <property type="term" value="P:positive regulation of SMAD protein signal transduction"/>
    <property type="evidence" value="ECO:0000250"/>
    <property type="project" value="UniProtKB"/>
</dbReference>
<dbReference type="GO" id="GO:0048661">
    <property type="term" value="P:positive regulation of smooth muscle cell proliferation"/>
    <property type="evidence" value="ECO:0007669"/>
    <property type="project" value="Ensembl"/>
</dbReference>
<dbReference type="GO" id="GO:0045944">
    <property type="term" value="P:positive regulation of transcription by RNA polymerase II"/>
    <property type="evidence" value="ECO:0000314"/>
    <property type="project" value="MGI"/>
</dbReference>
<dbReference type="GO" id="GO:0030949">
    <property type="term" value="P:positive regulation of vascular endothelial growth factor receptor signaling pathway"/>
    <property type="evidence" value="ECO:0000304"/>
    <property type="project" value="DFLAT"/>
</dbReference>
<dbReference type="GO" id="GO:0009791">
    <property type="term" value="P:post-embryonic development"/>
    <property type="evidence" value="ECO:0000315"/>
    <property type="project" value="MGI"/>
</dbReference>
<dbReference type="GO" id="GO:0012501">
    <property type="term" value="P:programmed cell death"/>
    <property type="evidence" value="ECO:0000266"/>
    <property type="project" value="MGI"/>
</dbReference>
<dbReference type="GO" id="GO:0060512">
    <property type="term" value="P:prostate gland morphogenesis"/>
    <property type="evidence" value="ECO:0000315"/>
    <property type="project" value="MGI"/>
</dbReference>
<dbReference type="GO" id="GO:0060513">
    <property type="term" value="P:prostatic bud formation"/>
    <property type="evidence" value="ECO:0000315"/>
    <property type="project" value="MGI"/>
</dbReference>
<dbReference type="GO" id="GO:0003184">
    <property type="term" value="P:pulmonary valve morphogenesis"/>
    <property type="evidence" value="ECO:0000315"/>
    <property type="project" value="BHF-UCL"/>
</dbReference>
<dbReference type="GO" id="GO:0060687">
    <property type="term" value="P:regulation of branching involved in prostate gland morphogenesis"/>
    <property type="evidence" value="ECO:0000315"/>
    <property type="project" value="MGI"/>
</dbReference>
<dbReference type="GO" id="GO:0061035">
    <property type="term" value="P:regulation of cartilage development"/>
    <property type="evidence" value="ECO:0000314"/>
    <property type="project" value="MGI"/>
</dbReference>
<dbReference type="GO" id="GO:0045595">
    <property type="term" value="P:regulation of cell differentiation"/>
    <property type="evidence" value="ECO:0000316"/>
    <property type="project" value="MGI"/>
</dbReference>
<dbReference type="GO" id="GO:0010453">
    <property type="term" value="P:regulation of cell fate commitment"/>
    <property type="evidence" value="ECO:0000250"/>
    <property type="project" value="CAFA"/>
</dbReference>
<dbReference type="GO" id="GO:0001936">
    <property type="term" value="P:regulation of endothelial cell proliferation"/>
    <property type="evidence" value="ECO:0000304"/>
    <property type="project" value="DFLAT"/>
</dbReference>
<dbReference type="GO" id="GO:0010468">
    <property type="term" value="P:regulation of gene expression"/>
    <property type="evidence" value="ECO:0000314"/>
    <property type="project" value="MGI"/>
</dbReference>
<dbReference type="GO" id="GO:1905770">
    <property type="term" value="P:regulation of mesodermal cell differentiation"/>
    <property type="evidence" value="ECO:0000314"/>
    <property type="project" value="MGI"/>
</dbReference>
<dbReference type="GO" id="GO:0060688">
    <property type="term" value="P:regulation of morphogenesis of a branching structure"/>
    <property type="evidence" value="ECO:0000315"/>
    <property type="project" value="MGI"/>
</dbReference>
<dbReference type="GO" id="GO:0042487">
    <property type="term" value="P:regulation of odontogenesis of dentin-containing tooth"/>
    <property type="evidence" value="ECO:0000316"/>
    <property type="project" value="MGI"/>
</dbReference>
<dbReference type="GO" id="GO:0042306">
    <property type="term" value="P:regulation of protein import into nucleus"/>
    <property type="evidence" value="ECO:0000266"/>
    <property type="project" value="MGI"/>
</dbReference>
<dbReference type="GO" id="GO:0051150">
    <property type="term" value="P:regulation of smooth muscle cell differentiation"/>
    <property type="evidence" value="ECO:0000314"/>
    <property type="project" value="MGI"/>
</dbReference>
<dbReference type="GO" id="GO:0048660">
    <property type="term" value="P:regulation of smooth muscle cell proliferation"/>
    <property type="evidence" value="ECO:0000314"/>
    <property type="project" value="MGI"/>
</dbReference>
<dbReference type="GO" id="GO:0003014">
    <property type="term" value="P:renal system process"/>
    <property type="evidence" value="ECO:0000315"/>
    <property type="project" value="MGI"/>
</dbReference>
<dbReference type="GO" id="GO:0003139">
    <property type="term" value="P:secondary heart field specification"/>
    <property type="evidence" value="ECO:0000250"/>
    <property type="project" value="UniProtKB"/>
</dbReference>
<dbReference type="GO" id="GO:0001501">
    <property type="term" value="P:skeletal system development"/>
    <property type="evidence" value="ECO:0000314"/>
    <property type="project" value="MGI"/>
</dbReference>
<dbReference type="GO" id="GO:0051145">
    <property type="term" value="P:smooth muscle cell differentiation"/>
    <property type="evidence" value="ECO:0000314"/>
    <property type="project" value="MGI"/>
</dbReference>
<dbReference type="GO" id="GO:0048745">
    <property type="term" value="P:smooth muscle tissue development"/>
    <property type="evidence" value="ECO:0000315"/>
    <property type="project" value="UniProtKB"/>
</dbReference>
<dbReference type="GO" id="GO:0010159">
    <property type="term" value="P:specification of animal organ position"/>
    <property type="evidence" value="ECO:0000315"/>
    <property type="project" value="MGI"/>
</dbReference>
<dbReference type="GO" id="GO:0042305">
    <property type="term" value="P:specification of segmental identity, mandibular segment"/>
    <property type="evidence" value="ECO:0000314"/>
    <property type="project" value="MGI"/>
</dbReference>
<dbReference type="GO" id="GO:0048863">
    <property type="term" value="P:stem cell differentiation"/>
    <property type="evidence" value="ECO:0000314"/>
    <property type="project" value="UniProtKB"/>
</dbReference>
<dbReference type="GO" id="GO:0021537">
    <property type="term" value="P:telencephalon development"/>
    <property type="evidence" value="ECO:0000266"/>
    <property type="project" value="MGI"/>
</dbReference>
<dbReference type="GO" id="GO:0021978">
    <property type="term" value="P:telencephalon regionalization"/>
    <property type="evidence" value="ECO:0000314"/>
    <property type="project" value="MGI"/>
</dbReference>
<dbReference type="GO" id="GO:0035990">
    <property type="term" value="P:tendon cell differentiation"/>
    <property type="evidence" value="ECO:0000315"/>
    <property type="project" value="UniProtKB"/>
</dbReference>
<dbReference type="GO" id="GO:0060438">
    <property type="term" value="P:trachea development"/>
    <property type="evidence" value="ECO:0000266"/>
    <property type="project" value="MGI"/>
</dbReference>
<dbReference type="GO" id="GO:0060440">
    <property type="term" value="P:trachea formation"/>
    <property type="evidence" value="ECO:0000315"/>
    <property type="project" value="MGI"/>
</dbReference>
<dbReference type="GO" id="GO:0006366">
    <property type="term" value="P:transcription by RNA polymerase II"/>
    <property type="evidence" value="ECO:0000314"/>
    <property type="project" value="MGI"/>
</dbReference>
<dbReference type="GO" id="GO:0003323">
    <property type="term" value="P:type B pancreatic cell development"/>
    <property type="evidence" value="ECO:0000250"/>
    <property type="project" value="UniProtKB"/>
</dbReference>
<dbReference type="GO" id="GO:0072197">
    <property type="term" value="P:ureter morphogenesis"/>
    <property type="evidence" value="ECO:0000315"/>
    <property type="project" value="UniProtKB"/>
</dbReference>
<dbReference type="GO" id="GO:0001657">
    <property type="term" value="P:ureteric bud development"/>
    <property type="evidence" value="ECO:0000314"/>
    <property type="project" value="MGI"/>
</dbReference>
<dbReference type="GO" id="GO:0001944">
    <property type="term" value="P:vasculature development"/>
    <property type="evidence" value="ECO:0000315"/>
    <property type="project" value="MGI"/>
</dbReference>
<dbReference type="CDD" id="cd19391">
    <property type="entry name" value="TGF_beta_BMP4_BMP2B"/>
    <property type="match status" value="1"/>
</dbReference>
<dbReference type="FunFam" id="2.10.90.10:FF:000103">
    <property type="entry name" value="Bone morphogenetic protein 16"/>
    <property type="match status" value="1"/>
</dbReference>
<dbReference type="FunFam" id="2.60.120.970:FF:000005">
    <property type="entry name" value="Bone morphogenetic protein 4"/>
    <property type="match status" value="1"/>
</dbReference>
<dbReference type="Gene3D" id="2.60.120.970">
    <property type="match status" value="1"/>
</dbReference>
<dbReference type="Gene3D" id="2.10.90.10">
    <property type="entry name" value="Cystine-knot cytokines"/>
    <property type="match status" value="1"/>
</dbReference>
<dbReference type="InterPro" id="IPR047833">
    <property type="entry name" value="BMP4_TGF_beta-like"/>
</dbReference>
<dbReference type="InterPro" id="IPR029034">
    <property type="entry name" value="Cystine-knot_cytokine"/>
</dbReference>
<dbReference type="InterPro" id="IPR001839">
    <property type="entry name" value="TGF-b_C"/>
</dbReference>
<dbReference type="InterPro" id="IPR001111">
    <property type="entry name" value="TGF-b_propeptide"/>
</dbReference>
<dbReference type="InterPro" id="IPR015615">
    <property type="entry name" value="TGF-beta-rel"/>
</dbReference>
<dbReference type="InterPro" id="IPR017948">
    <property type="entry name" value="TGFb_CS"/>
</dbReference>
<dbReference type="PANTHER" id="PTHR11848:SF165">
    <property type="entry name" value="BONE MORPHOGENETIC PROTEIN 4"/>
    <property type="match status" value="1"/>
</dbReference>
<dbReference type="PANTHER" id="PTHR11848">
    <property type="entry name" value="TGF-BETA FAMILY"/>
    <property type="match status" value="1"/>
</dbReference>
<dbReference type="Pfam" id="PF00019">
    <property type="entry name" value="TGF_beta"/>
    <property type="match status" value="1"/>
</dbReference>
<dbReference type="Pfam" id="PF00688">
    <property type="entry name" value="TGFb_propeptide"/>
    <property type="match status" value="1"/>
</dbReference>
<dbReference type="SMART" id="SM00204">
    <property type="entry name" value="TGFB"/>
    <property type="match status" value="1"/>
</dbReference>
<dbReference type="SUPFAM" id="SSF57501">
    <property type="entry name" value="Cystine-knot cytokines"/>
    <property type="match status" value="1"/>
</dbReference>
<dbReference type="PROSITE" id="PS00250">
    <property type="entry name" value="TGF_BETA_1"/>
    <property type="match status" value="1"/>
</dbReference>
<dbReference type="PROSITE" id="PS51362">
    <property type="entry name" value="TGF_BETA_2"/>
    <property type="match status" value="1"/>
</dbReference>
<organism>
    <name type="scientific">Mus musculus</name>
    <name type="common">Mouse</name>
    <dbReference type="NCBI Taxonomy" id="10090"/>
    <lineage>
        <taxon>Eukaryota</taxon>
        <taxon>Metazoa</taxon>
        <taxon>Chordata</taxon>
        <taxon>Craniata</taxon>
        <taxon>Vertebrata</taxon>
        <taxon>Euteleostomi</taxon>
        <taxon>Mammalia</taxon>
        <taxon>Eutheria</taxon>
        <taxon>Euarchontoglires</taxon>
        <taxon>Glires</taxon>
        <taxon>Rodentia</taxon>
        <taxon>Myomorpha</taxon>
        <taxon>Muroidea</taxon>
        <taxon>Muridae</taxon>
        <taxon>Murinae</taxon>
        <taxon>Mus</taxon>
        <taxon>Mus</taxon>
    </lineage>
</organism>
<sequence>MIPGNRMLMVVLLCQVLLGGASHASLIPETGKKKVAEIQGHAGGRRSGQSHELLRDFEATLLQMFGLRRRPQPSKSAVIPDYMRDLYRLQSGEEEEEEQSQGTGLEYPERPASRANTVRSFHHEEHLENIPGTSESSAFRFLFNLSSIPENEVISSAELRLFREQVDQGPDWEQGFHRINIYEVMKPPAEMVPGHLITRLLDTRLVHHNVTRWETFDVSPAVLRWTREKQPNYGLAIEVTHLHQTRTHQGQHVRISRSLPQGSGDWAQLRPLLVTFGHDGRGHTLTRRRAKRSPKHHPQRSRKKNKNCRRHSLYVDFSDVGWNDWIVAPPGYQAFYCHGDCPFPLADHLNSTNHAIVQTLVNSVNSSIPKACCVPTELSAISMLYLDEYDKVVLKNYQEMVVEGCGCR</sequence>
<gene>
    <name evidence="23" type="primary">Bmp4</name>
    <name evidence="23" type="synonym">Bmp-4</name>
    <name type="synonym">Dvr-4</name>
</gene>
<evidence type="ECO:0000250" key="1"/>
<evidence type="ECO:0000250" key="2">
    <source>
        <dbReference type="UniProtKB" id="P12644"/>
    </source>
</evidence>
<evidence type="ECO:0000255" key="3"/>
<evidence type="ECO:0000256" key="4">
    <source>
        <dbReference type="SAM" id="MobiDB-lite"/>
    </source>
</evidence>
<evidence type="ECO:0000269" key="5">
    <source>
    </source>
</evidence>
<evidence type="ECO:0000269" key="6">
    <source>
    </source>
</evidence>
<evidence type="ECO:0000269" key="7">
    <source>
    </source>
</evidence>
<evidence type="ECO:0000269" key="8">
    <source>
    </source>
</evidence>
<evidence type="ECO:0000269" key="9">
    <source>
    </source>
</evidence>
<evidence type="ECO:0000269" key="10">
    <source>
    </source>
</evidence>
<evidence type="ECO:0000269" key="11">
    <source>
    </source>
</evidence>
<evidence type="ECO:0000269" key="12">
    <source>
    </source>
</evidence>
<evidence type="ECO:0000269" key="13">
    <source>
    </source>
</evidence>
<evidence type="ECO:0000269" key="14">
    <source>
    </source>
</evidence>
<evidence type="ECO:0000269" key="15">
    <source>
    </source>
</evidence>
<evidence type="ECO:0000269" key="16">
    <source>
    </source>
</evidence>
<evidence type="ECO:0000269" key="17">
    <source>
    </source>
</evidence>
<evidence type="ECO:0000269" key="18">
    <source>
    </source>
</evidence>
<evidence type="ECO:0000269" key="19">
    <source>
    </source>
</evidence>
<evidence type="ECO:0000269" key="20">
    <source>
    </source>
</evidence>
<evidence type="ECO:0000269" key="21">
    <source>
    </source>
</evidence>
<evidence type="ECO:0000305" key="22"/>
<evidence type="ECO:0000312" key="23">
    <source>
        <dbReference type="MGI" id="MGI:88180"/>
    </source>
</evidence>
<comment type="function">
    <text evidence="2 5 8 10 14 17 18 20 21">Growth factor of the TGF-beta superfamily that plays essential roles in many developmental processes, including neurogenesis, vascular development, angiogenesis and osteogenesis (PubMed:10049358, PubMed:14973287, PubMed:15206957). Acts in concert with PTHLH/PTHRP to stimulate ductal outgrowth during embryonic mammary development and to inhibit hair follicle induction (PubMed:17301089). Initiates the canonical BMP signaling cascade by associating with type I receptor BMPR1A and type II receptor BMPR2. Once all three components are bound together in a complex at the cell surface, BMPR2 phosphorylates and activates BMPR1A. In turn, BMPR1A propagates signal by phosphorylating SMAD1/5/8 that travel to the nucleus and act as activators and repressors of transcription of target genes. Positively regulates the expression of odontogenic development regulator MSX1 via inducing the IPO7-mediated import of SMAD1 to the nucleus (PubMed:34995814). Required for MSX1-mediated mesenchymal molar tooth bud development beyond the bud stage, via promoting Wnt signaling (PubMed:27713059, PubMed:8898217). Acts as a positive regulator of odontoblast differentiation during mesenchymal tooth germ formation, expression is repressed during the bell stage by MSX1-mediated inhibition of CTNNB1 signaling (PubMed:29148101). Able to induce its own expression in dental mesenchymal cells and also in the neighboring dental epithelial cells via an MSX1-mediated pathway (PubMed:8898217). Can also signal through non-canonical BMP pathways such as ERK/MAP kinase, PI3K/Akt or SRC cascades. For example, induces SRC phosphorylation which, in turn, activates VEGFR2, leading to an angiogenic response (By similarity).</text>
</comment>
<comment type="subunit">
    <text evidence="2 6 7 8 9 10 11 12 13 15">Homodimer; disulfide-linked (By similarity). Interacts with SOSTDC1, GREM2, RGMA, RGMB and RGMC. Part of a complex consisting of TWSG1 and CHRD. Interacts with the serine proteases, HTRA1 and HTRA3; the interaction with either inhibits BMP4-mediated signaling. The HTRA protease activity is required for this inhibition. Interacts with FBN1 (via N-terminal domain) and FBN2 (By similarity). Interacts with type I receptor BMPR1A (By similarity). Interacts with type II receptor BMPR2 (By similarity). Interacts with FSTL1; this interaction inhibits the activation of the BMP4/Smad1/5/8 signaling pathway (By similarity). Interacts with SCUBE3 (By similarity). Interacts with TGFBR3 (By similarity).</text>
</comment>
<comment type="subcellular location">
    <subcellularLocation>
        <location>Secreted</location>
        <location>Extracellular space</location>
        <location>Extracellular matrix</location>
    </subcellularLocation>
</comment>
<comment type="tissue specificity">
    <text evidence="5 19">In the cochlea, detected in nonprosensory regions and outer sulcus (at protein level) (PubMed:32127020). Prior to gastrulation, expressed in the extraembryonic ectoderm. Later, expressed in the extraembryonic mesoderm (PubMed:10049358).</text>
</comment>
<comment type="developmental stage">
    <text evidence="16 18 21">Expressed in the lower molar mesenchyme at 13.5 dpc and 14.5 dpc (PubMed:8898217). Expressed in early bell stage dental mesenchymal cells at 15.5 dpc (at protein level) (PubMed:24028588). Expressed in bell stage dental mesenchymal cells at 17.5 dpc (at protein level) (PubMed:29148101).</text>
</comment>
<comment type="disruption phenotype">
    <text evidence="5 17">Homozygous null embryos contain no primordial germ cells (PubMed:10049358). They also lack an allantois, an extraembryonic mesodermal tissue derived from precursors in the proximal epiblast (PubMed:10049358). Mandibular molar tooth germs arrest in the bud stage (PubMed:27713059). Failure to form the primary enamel knot in the mandibular molar tooth buds at 13.5 dpc. Significantly reduces the expression of Lef1 and Axin2 in the maxillary molar tooth germs and mandibular molar buds at 13.5 dpc (PubMed:27713059). Expression of Dkk2 and Sfrp2 expanded into the distal tooth mesenchyme in molar mandibular tooth buds at 13.5 dpc (PubMed:27713059).</text>
</comment>
<comment type="similarity">
    <text evidence="22">Belongs to the TGF-beta family.</text>
</comment>
<comment type="sequence caution" evidence="22">
    <conflict type="erroneous initiation">
        <sequence resource="EMBL-CDS" id="AAC37698"/>
    </conflict>
</comment>
<keyword id="KW-0891">Chondrogenesis</keyword>
<keyword id="KW-0165">Cleavage on pair of basic residues</keyword>
<keyword id="KW-0202">Cytokine</keyword>
<keyword id="KW-0217">Developmental protein</keyword>
<keyword id="KW-0221">Differentiation</keyword>
<keyword id="KW-1015">Disulfide bond</keyword>
<keyword id="KW-0272">Extracellular matrix</keyword>
<keyword id="KW-0325">Glycoprotein</keyword>
<keyword id="KW-0339">Growth factor</keyword>
<keyword id="KW-0892">Osteogenesis</keyword>
<keyword id="KW-0597">Phosphoprotein</keyword>
<keyword id="KW-1185">Reference proteome</keyword>
<keyword id="KW-0964">Secreted</keyword>
<keyword id="KW-0732">Signal</keyword>
<reference key="1">
    <citation type="submission" date="1992-10" db="EMBL/GenBank/DDBJ databases">
        <title>Nucleotide sequence of the mouse bone morphogenetic protein-4 (BMP-4) cDNA.</title>
        <authorList>
            <person name="Dickinson M.E."/>
            <person name="van der Meer-De Jong R."/>
            <person name="Hogan B.L.M."/>
        </authorList>
    </citation>
    <scope>NUCLEOTIDE SEQUENCE [MRNA]</scope>
</reference>
<reference key="2">
    <citation type="journal article" date="1993" name="Biochem. Biophys. Res. Commun.">
        <title>Murine bone morphogenetic protein-4 gene: existence of multiple promoters and exons for the 5'-untranslated region.</title>
        <authorList>
            <person name="Kurihara T."/>
            <person name="Kitamura K."/>
            <person name="Takaoka K."/>
            <person name="Nakazato H."/>
        </authorList>
    </citation>
    <scope>NUCLEOTIDE SEQUENCE [GENOMIC DNA]</scope>
</reference>
<reference key="3">
    <citation type="journal article" date="1993" name="Clin. Orthop. Relat. Res.">
        <title>Gene cloning and expression of a bone morphogenetic protein derived from a murine osteosarcoma.</title>
        <authorList>
            <person name="Takaoka K."/>
            <person name="Yoshikawa H."/>
            <person name="Hasimoto J."/>
            <person name="Masuhara K."/>
            <person name="Miyamoto S."/>
            <person name="Suzuki S."/>
            <person name="Ono K."/>
            <person name="Matsui M."/>
            <person name="Oikawa S."/>
            <person name="Tsuruoka N."/>
        </authorList>
    </citation>
    <scope>NUCLEOTIDE SEQUENCE [MRNA]</scope>
</reference>
<reference key="4">
    <citation type="journal article" date="1995" name="J. Biol. Chem.">
        <title>The mouse bone morphogenetic protein-4 gene. Analysis of promoter utilization in fetal rat calvarial osteoblasts and regulation by COUP-TFI orphan receptor.</title>
        <authorList>
            <person name="Feng J.Q."/>
            <person name="Chen D."/>
            <person name="Cooney A.J."/>
            <person name="Tsai M."/>
            <person name="Harris M.A."/>
            <person name="Tsai S.Y."/>
            <person name="Feng M."/>
            <person name="Mundy G.R."/>
            <person name="Harris S.E."/>
        </authorList>
    </citation>
    <scope>NUCLEOTIDE SEQUENCE [GENOMIC DNA]</scope>
    <source>
        <strain>129/Sv</strain>
        <tissue>Liver</tissue>
    </source>
</reference>
<reference key="5">
    <citation type="journal article" date="2004" name="Genome Res.">
        <title>The status, quality, and expansion of the NIH full-length cDNA project: the Mammalian Gene Collection (MGC).</title>
        <authorList>
            <consortium name="The MGC Project Team"/>
        </authorList>
    </citation>
    <scope>NUCLEOTIDE SEQUENCE [LARGE SCALE MRNA]</scope>
    <source>
        <strain>C3H/He</strain>
        <strain>FVB/N</strain>
        <tissue>Colon</tissue>
        <tissue>Osteoblast</tissue>
        <tissue>Salivary gland</tissue>
    </source>
</reference>
<reference key="6">
    <citation type="journal article" date="1990" name="Genomics">
        <title>Chromosomal localization of seven members of the murine TGF-beta superfamily suggests close linkage to several morphogenetic mutant loci.</title>
        <authorList>
            <person name="Dickinson M.E."/>
            <person name="Kobrin M.S."/>
            <person name="Silan C.M."/>
            <person name="Kingsley D.M."/>
            <person name="Justice M.J."/>
            <person name="Miller D.A."/>
            <person name="Ceci J.D."/>
            <person name="Lock L.F."/>
            <person name="Lee A."/>
            <person name="Buchberg A.M."/>
            <person name="Siracusa L.D."/>
            <person name="Lyons K.M."/>
            <person name="Derynck R."/>
            <person name="Hogan B.L.M."/>
            <person name="Copeland N.G."/>
            <person name="Jenkins N.A."/>
        </authorList>
    </citation>
    <scope>NUCLEOTIDE SEQUENCE OF 241-408</scope>
</reference>
<reference key="7">
    <citation type="journal article" date="1996" name="Development">
        <title>Msx1 controls inductive signaling in mammalian tooth morphogenesis.</title>
        <authorList>
            <person name="Chen Y."/>
            <person name="Bei M."/>
            <person name="Woo I."/>
            <person name="Satokata I."/>
            <person name="Maas R."/>
        </authorList>
    </citation>
    <scope>FUNCTION</scope>
    <scope>DEVELOPMENTAL STAGE</scope>
</reference>
<reference key="8">
    <citation type="journal article" date="1999" name="Genes Dev.">
        <title>Bmp4 is required for the generation of primordial germ cells in the mouse embryo.</title>
        <authorList>
            <person name="Lawson K.A."/>
            <person name="Dunn N.R."/>
            <person name="Roelen B.A."/>
            <person name="Zeinstra L.M."/>
            <person name="Davis A.M."/>
            <person name="Wright C.V."/>
            <person name="Korving J.P."/>
            <person name="Hogan B.L."/>
        </authorList>
    </citation>
    <scope>FUNCTION</scope>
    <scope>DISRUPTION PHENOTYPE</scope>
    <scope>TISSUE SPECIFICITY</scope>
</reference>
<reference key="9">
    <citation type="journal article" date="2001" name="Nature">
        <title>Homologues of Twisted gastrulation are extracellular cofactors in antagonism of BMP signalling.</title>
        <authorList>
            <person name="Scott I.C."/>
            <person name="Blitz I.L."/>
            <person name="Pappano W.N."/>
            <person name="Maas S.A."/>
            <person name="Cho K.W.Y."/>
            <person name="Greenspan D.S."/>
        </authorList>
    </citation>
    <scope>INTERACTION WITH TWSG1 AND CHRD</scope>
</reference>
<reference key="10">
    <citation type="journal article" date="2003" name="Dev. Biol.">
        <title>Identification of a secreted BMP antagonist, ectodin, integrating BMP, FGF, and SHH signals from the tooth enamel knot.</title>
        <authorList>
            <person name="Laurikkala J."/>
            <person name="Kassai Y."/>
            <person name="Pakkasjaervi L."/>
            <person name="Thesleff I."/>
            <person name="Itoh N."/>
        </authorList>
    </citation>
    <scope>INTERACTION WITH SOSTDC1</scope>
</reference>
<reference key="11">
    <citation type="journal article" date="2004" name="Dev. Growth Differ.">
        <title>Developmentally regulated expression of mouse HtrA3 and its role as an inhibitor of TGF-beta signaling.</title>
        <authorList>
            <person name="Tocharus J."/>
            <person name="Tsuchiya A."/>
            <person name="Kajikawa M."/>
            <person name="Ueta Y."/>
            <person name="Oka C."/>
            <person name="Kawaichi M."/>
        </authorList>
    </citation>
    <scope>INTERACTION WITH HTRA3</scope>
    <scope>FUNCTION</scope>
</reference>
<reference key="12">
    <citation type="journal article" date="2004" name="Development">
        <title>HtrA1 serine protease inhibits signaling mediated by Tgfbeta family proteins.</title>
        <authorList>
            <person name="Oka C."/>
            <person name="Tsujimoto R."/>
            <person name="Kajikawa M."/>
            <person name="Koshiba-Takeuchi K."/>
            <person name="Ina J."/>
            <person name="Yano M."/>
            <person name="Tsuchiya A."/>
            <person name="Ueta Y."/>
            <person name="Soma A."/>
            <person name="Kanda H."/>
            <person name="Matsumoto M."/>
            <person name="Kawaichi M."/>
        </authorList>
    </citation>
    <scope>INTERACTION WITH HTRA1</scope>
    <scope>FUNCTION</scope>
</reference>
<reference key="13">
    <citation type="journal article" date="2004" name="J. Biol. Chem.">
        <title>Protein related to DAN and cerberus is a bone morphogenetic protein antagonist that participates in ovarian paracrine regulation.</title>
        <authorList>
            <person name="Sudo S."/>
            <person name="Avsian-Kretchmer O."/>
            <person name="Wang L.S."/>
            <person name="Hsueh A.J."/>
        </authorList>
    </citation>
    <scope>INTERACTION WITH GREM2</scope>
</reference>
<reference key="14">
    <citation type="journal article" date="2005" name="J. Biol. Chem.">
        <title>DRAGON, a bone morphogenetic protein co-receptor.</title>
        <authorList>
            <person name="Samad T.A."/>
            <person name="Rebbapragada A."/>
            <person name="Bell E."/>
            <person name="Zhang Y."/>
            <person name="Sidis Y."/>
            <person name="Jeong S.-J."/>
            <person name="Campagna J.A."/>
            <person name="Perusini S."/>
            <person name="Fabrizio D.A."/>
            <person name="Schneyer A.L."/>
            <person name="Lin H.Y."/>
            <person name="Brivanlou A.H."/>
            <person name="Attisano L."/>
            <person name="Woolf C.J."/>
        </authorList>
    </citation>
    <scope>INTERACTION WITH RGMB</scope>
</reference>
<reference key="15">
    <citation type="journal article" date="2005" name="J. Biol. Chem.">
        <title>Repulsive guidance molecule (RGMa), a DRAGON homologue, is a bone morphogenetic protein co-receptor.</title>
        <authorList>
            <person name="Babitt J.L."/>
            <person name="Zhang Y."/>
            <person name="Samad T.A."/>
            <person name="Xia Y."/>
            <person name="Tang J."/>
            <person name="Campagna J.A."/>
            <person name="Schneyer A.L."/>
            <person name="Woolf C.J."/>
            <person name="Lin H.Y."/>
        </authorList>
    </citation>
    <scope>INTERACTION WITH RGMA</scope>
</reference>
<reference key="16">
    <citation type="journal article" date="2006" name="Nat. Genet.">
        <title>Bone morphogenetic protein signaling by hemojuvelin regulates hepcidin expression.</title>
        <authorList>
            <person name="Babitt J.L."/>
            <person name="Huang F.W."/>
            <person name="Wrighting D.M."/>
            <person name="Xia Y."/>
            <person name="Sidis Y."/>
            <person name="Samad T.A."/>
            <person name="Campagna J.A."/>
            <person name="Chung R.T."/>
            <person name="Schneyer A.L."/>
            <person name="Woolf C.J."/>
            <person name="Andrews N.C."/>
            <person name="Lin H.Y."/>
        </authorList>
    </citation>
    <scope>INTERACTION WITH RGMC</scope>
</reference>
<reference key="17">
    <citation type="journal article" date="2007" name="Development">
        <title>BMP4 and PTHrP interact to stimulate ductal outgrowth during embryonic mammary development and to inhibit hair follicle induction.</title>
        <authorList>
            <person name="Hens J.R."/>
            <person name="Dann P."/>
            <person name="Zhang J.P."/>
            <person name="Harris S."/>
            <person name="Robinson G.W."/>
            <person name="Wysolmerski J."/>
        </authorList>
    </citation>
    <scope>FUNCTION</scope>
</reference>
<reference key="18">
    <citation type="journal article" date="2007" name="J. Biol. Chem.">
        <title>Repulsive guidance molecule RGMa alters utilization of bone morphogenetic protein (BMP) type II receptors by BMP2 and BMP4.</title>
        <authorList>
            <person name="Xia Y."/>
            <person name="Yu P.B."/>
            <person name="Sidis Y."/>
            <person name="Beppu H."/>
            <person name="Bloch K.D."/>
            <person name="Schneyer A.L."/>
            <person name="Lin H.Y."/>
        </authorList>
    </citation>
    <scope>INTERACTION WITH RGMA</scope>
</reference>
<reference key="19">
    <citation type="journal article" date="2013" name="Eur. J. Oral Sci.">
        <title>Msx1 regulates proliferation and differentiation of mouse dental mesenchymal cells in culture.</title>
        <authorList>
            <person name="Feng X.Y."/>
            <person name="Zhao Y.M."/>
            <person name="Wang W.J."/>
            <person name="Ge L.H."/>
        </authorList>
    </citation>
    <scope>DEVELOPMENTAL STAGE</scope>
</reference>
<reference key="20">
    <citation type="journal article" date="2016" name="Dev. Biol.">
        <title>Bmp4-Msx1 signaling and Osr2 control tooth organogenesis through antagonistic regulation of secreted Wnt antagonists.</title>
        <authorList>
            <person name="Jia S."/>
            <person name="Kwon H.E."/>
            <person name="Lan Y."/>
            <person name="Zhou J."/>
            <person name="Liu H."/>
            <person name="Jiang R."/>
        </authorList>
    </citation>
    <scope>FUNCTION</scope>
    <scope>DISRUPTION PHENOTYPE</scope>
</reference>
<reference key="21">
    <citation type="journal article" date="2018" name="Eur. J. Oral Sci.">
        <title>Homeobox protein MSX-1 inhibits expression of bone morphogenetic protein 2, bone morphogenetic protein 4, and lymphoid enhancer-binding factor 1 via Wnt/beta-catenin signaling to prevent differentiation of dental mesenchymal cells during the late bell stage.</title>
        <authorList>
            <person name="Feng X.Y."/>
            <person name="Wu X.S."/>
            <person name="Wang J.S."/>
            <person name="Zhang C.M."/>
            <person name="Wang S.L."/>
        </authorList>
    </citation>
    <scope>FUNCTION</scope>
    <scope>DEVELOPMENTAL STAGE</scope>
</reference>
<reference key="22">
    <citation type="journal article" date="2020" name="Mol. Brain">
        <title>Tsukushi is essential for the development of the inner ear.</title>
        <authorList>
            <person name="Miwa T."/>
            <person name="Ohta K."/>
            <person name="Ito N."/>
            <person name="Hattori S."/>
            <person name="Miyakawa T."/>
            <person name="Takeo T."/>
            <person name="Nakagata N."/>
            <person name="Song W.J."/>
            <person name="Minoda R."/>
        </authorList>
    </citation>
    <scope>TISSUE SPECIFICITY</scope>
</reference>
<reference key="23">
    <citation type="journal article" date="2022" name="Cells Dev.">
        <title>The regulation of Msx1 by BMP4/pSmad1/5 signaling is mediated by importin7 in dental mesenchymal cells.</title>
        <authorList>
            <person name="She Y."/>
            <person name="Zhang Y."/>
            <person name="Xiao Z."/>
            <person name="Yuan G."/>
            <person name="Yang G."/>
        </authorList>
    </citation>
    <scope>FUNCTION</scope>
</reference>
<accession>P21275</accession>